<keyword id="KW-1185">Reference proteome</keyword>
<keyword id="KW-0687">Ribonucleoprotein</keyword>
<keyword id="KW-0689">Ribosomal protein</keyword>
<keyword id="KW-0694">RNA-binding</keyword>
<keyword id="KW-0699">rRNA-binding</keyword>
<gene>
    <name evidence="1" type="primary">rpsS</name>
    <name evidence="1" type="synonym">rps19</name>
    <name type="ordered locus">Syncc9902_1959</name>
</gene>
<evidence type="ECO:0000255" key="1">
    <source>
        <dbReference type="HAMAP-Rule" id="MF_00531"/>
    </source>
</evidence>
<evidence type="ECO:0000305" key="2"/>
<reference key="1">
    <citation type="submission" date="2005-08" db="EMBL/GenBank/DDBJ databases">
        <title>Complete sequence of Synechococcus sp. CC9902.</title>
        <authorList>
            <person name="Copeland A."/>
            <person name="Lucas S."/>
            <person name="Lapidus A."/>
            <person name="Barry K."/>
            <person name="Detter J.C."/>
            <person name="Glavina T."/>
            <person name="Hammon N."/>
            <person name="Israni S."/>
            <person name="Pitluck S."/>
            <person name="Martinez M."/>
            <person name="Schmutz J."/>
            <person name="Larimer F."/>
            <person name="Land M."/>
            <person name="Kyrpides N."/>
            <person name="Ivanova N."/>
            <person name="Richardson P."/>
        </authorList>
    </citation>
    <scope>NUCLEOTIDE SEQUENCE [LARGE SCALE GENOMIC DNA]</scope>
    <source>
        <strain>CC9902</strain>
    </source>
</reference>
<proteinExistence type="inferred from homology"/>
<organism>
    <name type="scientific">Synechococcus sp. (strain CC9902)</name>
    <dbReference type="NCBI Taxonomy" id="316279"/>
    <lineage>
        <taxon>Bacteria</taxon>
        <taxon>Bacillati</taxon>
        <taxon>Cyanobacteriota</taxon>
        <taxon>Cyanophyceae</taxon>
        <taxon>Synechococcales</taxon>
        <taxon>Synechococcaceae</taxon>
        <taxon>Synechococcus</taxon>
    </lineage>
</organism>
<comment type="function">
    <text evidence="1">Protein S19 forms a complex with S13 that binds strongly to the 16S ribosomal RNA.</text>
</comment>
<comment type="similarity">
    <text evidence="1">Belongs to the universal ribosomal protein uS19 family.</text>
</comment>
<name>RS19_SYNS9</name>
<sequence length="91" mass="10180">MGRSLKKGPFIADSLLRKLEKQNDNDDKSVIKTWSRASTILPMMIGHTIAVHNGKSHIPVFITEQMVGHKLGEFAPTRTFKGHIKDKKGGR</sequence>
<dbReference type="EMBL" id="CP000097">
    <property type="protein sequence ID" value="ABB26917.1"/>
    <property type="molecule type" value="Genomic_DNA"/>
</dbReference>
<dbReference type="RefSeq" id="WP_009788930.1">
    <property type="nucleotide sequence ID" value="NC_007513.1"/>
</dbReference>
<dbReference type="SMR" id="Q3AUW8"/>
<dbReference type="STRING" id="316279.Syncc9902_1959"/>
<dbReference type="KEGG" id="sye:Syncc9902_1959"/>
<dbReference type="eggNOG" id="COG0185">
    <property type="taxonomic scope" value="Bacteria"/>
</dbReference>
<dbReference type="HOGENOM" id="CLU_144911_0_1_3"/>
<dbReference type="OrthoDB" id="9797833at2"/>
<dbReference type="Proteomes" id="UP000002712">
    <property type="component" value="Chromosome"/>
</dbReference>
<dbReference type="GO" id="GO:0005737">
    <property type="term" value="C:cytoplasm"/>
    <property type="evidence" value="ECO:0007669"/>
    <property type="project" value="UniProtKB-ARBA"/>
</dbReference>
<dbReference type="GO" id="GO:0015935">
    <property type="term" value="C:small ribosomal subunit"/>
    <property type="evidence" value="ECO:0007669"/>
    <property type="project" value="InterPro"/>
</dbReference>
<dbReference type="GO" id="GO:0019843">
    <property type="term" value="F:rRNA binding"/>
    <property type="evidence" value="ECO:0007669"/>
    <property type="project" value="UniProtKB-UniRule"/>
</dbReference>
<dbReference type="GO" id="GO:0003735">
    <property type="term" value="F:structural constituent of ribosome"/>
    <property type="evidence" value="ECO:0007669"/>
    <property type="project" value="InterPro"/>
</dbReference>
<dbReference type="GO" id="GO:0000028">
    <property type="term" value="P:ribosomal small subunit assembly"/>
    <property type="evidence" value="ECO:0007669"/>
    <property type="project" value="TreeGrafter"/>
</dbReference>
<dbReference type="GO" id="GO:0006412">
    <property type="term" value="P:translation"/>
    <property type="evidence" value="ECO:0007669"/>
    <property type="project" value="UniProtKB-UniRule"/>
</dbReference>
<dbReference type="FunFam" id="3.30.860.10:FF:000001">
    <property type="entry name" value="30S ribosomal protein S19"/>
    <property type="match status" value="1"/>
</dbReference>
<dbReference type="Gene3D" id="3.30.860.10">
    <property type="entry name" value="30s Ribosomal Protein S19, Chain A"/>
    <property type="match status" value="1"/>
</dbReference>
<dbReference type="HAMAP" id="MF_00531">
    <property type="entry name" value="Ribosomal_uS19"/>
    <property type="match status" value="1"/>
</dbReference>
<dbReference type="InterPro" id="IPR002222">
    <property type="entry name" value="Ribosomal_uS19"/>
</dbReference>
<dbReference type="InterPro" id="IPR005732">
    <property type="entry name" value="Ribosomal_uS19_bac-type"/>
</dbReference>
<dbReference type="InterPro" id="IPR020934">
    <property type="entry name" value="Ribosomal_uS19_CS"/>
</dbReference>
<dbReference type="InterPro" id="IPR023575">
    <property type="entry name" value="Ribosomal_uS19_SF"/>
</dbReference>
<dbReference type="NCBIfam" id="TIGR01050">
    <property type="entry name" value="rpsS_bact"/>
    <property type="match status" value="1"/>
</dbReference>
<dbReference type="PANTHER" id="PTHR11880">
    <property type="entry name" value="RIBOSOMAL PROTEIN S19P FAMILY MEMBER"/>
    <property type="match status" value="1"/>
</dbReference>
<dbReference type="PANTHER" id="PTHR11880:SF8">
    <property type="entry name" value="SMALL RIBOSOMAL SUBUNIT PROTEIN US19M"/>
    <property type="match status" value="1"/>
</dbReference>
<dbReference type="Pfam" id="PF00203">
    <property type="entry name" value="Ribosomal_S19"/>
    <property type="match status" value="1"/>
</dbReference>
<dbReference type="PIRSF" id="PIRSF002144">
    <property type="entry name" value="Ribosomal_S19"/>
    <property type="match status" value="1"/>
</dbReference>
<dbReference type="PRINTS" id="PR00975">
    <property type="entry name" value="RIBOSOMALS19"/>
</dbReference>
<dbReference type="SUPFAM" id="SSF54570">
    <property type="entry name" value="Ribosomal protein S19"/>
    <property type="match status" value="1"/>
</dbReference>
<dbReference type="PROSITE" id="PS00323">
    <property type="entry name" value="RIBOSOMAL_S19"/>
    <property type="match status" value="1"/>
</dbReference>
<feature type="chain" id="PRO_0000265451" description="Small ribosomal subunit protein uS19">
    <location>
        <begin position="1"/>
        <end position="91"/>
    </location>
</feature>
<accession>Q3AUW8</accession>
<protein>
    <recommendedName>
        <fullName evidence="1">Small ribosomal subunit protein uS19</fullName>
    </recommendedName>
    <alternativeName>
        <fullName evidence="2">30S ribosomal protein S19</fullName>
    </alternativeName>
</protein>